<gene>
    <name evidence="1" type="primary">secA</name>
    <name type="ordered locus">BWG_0093</name>
</gene>
<feature type="chain" id="PRO_1000215109" description="Protein translocase subunit SecA">
    <location>
        <begin position="1"/>
        <end position="901"/>
    </location>
</feature>
<feature type="region of interest" description="Disordered" evidence="2">
    <location>
        <begin position="859"/>
        <end position="901"/>
    </location>
</feature>
<feature type="compositionally biased region" description="Basic residues" evidence="2">
    <location>
        <begin position="891"/>
        <end position="901"/>
    </location>
</feature>
<feature type="binding site" evidence="1">
    <location>
        <position position="87"/>
    </location>
    <ligand>
        <name>ATP</name>
        <dbReference type="ChEBI" id="CHEBI:30616"/>
    </ligand>
</feature>
<feature type="binding site" evidence="1">
    <location>
        <begin position="105"/>
        <end position="109"/>
    </location>
    <ligand>
        <name>ATP</name>
        <dbReference type="ChEBI" id="CHEBI:30616"/>
    </ligand>
</feature>
<feature type="binding site" evidence="1">
    <location>
        <position position="512"/>
    </location>
    <ligand>
        <name>ATP</name>
        <dbReference type="ChEBI" id="CHEBI:30616"/>
    </ligand>
</feature>
<feature type="binding site" evidence="1">
    <location>
        <position position="885"/>
    </location>
    <ligand>
        <name>Zn(2+)</name>
        <dbReference type="ChEBI" id="CHEBI:29105"/>
    </ligand>
</feature>
<feature type="binding site" evidence="1">
    <location>
        <position position="887"/>
    </location>
    <ligand>
        <name>Zn(2+)</name>
        <dbReference type="ChEBI" id="CHEBI:29105"/>
    </ligand>
</feature>
<feature type="binding site" evidence="1">
    <location>
        <position position="896"/>
    </location>
    <ligand>
        <name>Zn(2+)</name>
        <dbReference type="ChEBI" id="CHEBI:29105"/>
    </ligand>
</feature>
<feature type="binding site" evidence="1">
    <location>
        <position position="897"/>
    </location>
    <ligand>
        <name>Zn(2+)</name>
        <dbReference type="ChEBI" id="CHEBI:29105"/>
    </ligand>
</feature>
<organism>
    <name type="scientific">Escherichia coli (strain K12 / MC4100 / BW2952)</name>
    <dbReference type="NCBI Taxonomy" id="595496"/>
    <lineage>
        <taxon>Bacteria</taxon>
        <taxon>Pseudomonadati</taxon>
        <taxon>Pseudomonadota</taxon>
        <taxon>Gammaproteobacteria</taxon>
        <taxon>Enterobacterales</taxon>
        <taxon>Enterobacteriaceae</taxon>
        <taxon>Escherichia</taxon>
    </lineage>
</organism>
<protein>
    <recommendedName>
        <fullName evidence="1">Protein translocase subunit SecA</fullName>
        <ecNumber evidence="1">7.4.2.8</ecNumber>
    </recommendedName>
</protein>
<proteinExistence type="inferred from homology"/>
<accession>C4ZRJ3</accession>
<name>SECA_ECOBW</name>
<evidence type="ECO:0000255" key="1">
    <source>
        <dbReference type="HAMAP-Rule" id="MF_01382"/>
    </source>
</evidence>
<evidence type="ECO:0000256" key="2">
    <source>
        <dbReference type="SAM" id="MobiDB-lite"/>
    </source>
</evidence>
<comment type="function">
    <text evidence="1">Part of the Sec protein translocase complex. Interacts with the SecYEG preprotein conducting channel. Has a central role in coupling the hydrolysis of ATP to the transfer of proteins into and across the cell membrane, serving both as a receptor for the preprotein-SecB complex and as an ATP-driven molecular motor driving the stepwise translocation of polypeptide chains across the membrane.</text>
</comment>
<comment type="catalytic activity">
    <reaction evidence="1">
        <text>ATP + H2O + cellular proteinSide 1 = ADP + phosphate + cellular proteinSide 2.</text>
        <dbReference type="EC" id="7.4.2.8"/>
    </reaction>
</comment>
<comment type="cofactor">
    <cofactor evidence="1">
        <name>Zn(2+)</name>
        <dbReference type="ChEBI" id="CHEBI:29105"/>
    </cofactor>
    <text evidence="1">May bind 1 zinc ion per subunit.</text>
</comment>
<comment type="subunit">
    <text evidence="1">Monomer and homodimer. Part of the essential Sec protein translocation apparatus which comprises SecA, SecYEG and auxiliary proteins SecDF-YajC and YidC.</text>
</comment>
<comment type="subcellular location">
    <subcellularLocation>
        <location evidence="1">Cell inner membrane</location>
        <topology evidence="1">Peripheral membrane protein</topology>
        <orientation evidence="1">Cytoplasmic side</orientation>
    </subcellularLocation>
    <subcellularLocation>
        <location evidence="1">Cytoplasm</location>
    </subcellularLocation>
    <text evidence="1">Distribution is 50-50.</text>
</comment>
<comment type="induction">
    <text evidence="1">Repressed under conditions of excess protein secretion capacity and derepressed when protein secretion becomes limiting. This is regulated by SecM.</text>
</comment>
<comment type="similarity">
    <text evidence="1">Belongs to the SecA family.</text>
</comment>
<dbReference type="EC" id="7.4.2.8" evidence="1"/>
<dbReference type="EMBL" id="CP001396">
    <property type="protein sequence ID" value="ACR65272.1"/>
    <property type="molecule type" value="Genomic_DNA"/>
</dbReference>
<dbReference type="RefSeq" id="WP_000905789.1">
    <property type="nucleotide sequence ID" value="NC_012759.1"/>
</dbReference>
<dbReference type="SMR" id="C4ZRJ3"/>
<dbReference type="GeneID" id="93777336"/>
<dbReference type="KEGG" id="ebw:BWG_0093"/>
<dbReference type="HOGENOM" id="CLU_005314_3_0_6"/>
<dbReference type="GO" id="GO:0031522">
    <property type="term" value="C:cell envelope Sec protein transport complex"/>
    <property type="evidence" value="ECO:0007669"/>
    <property type="project" value="TreeGrafter"/>
</dbReference>
<dbReference type="GO" id="GO:0005829">
    <property type="term" value="C:cytosol"/>
    <property type="evidence" value="ECO:0007669"/>
    <property type="project" value="TreeGrafter"/>
</dbReference>
<dbReference type="GO" id="GO:0005886">
    <property type="term" value="C:plasma membrane"/>
    <property type="evidence" value="ECO:0007669"/>
    <property type="project" value="UniProtKB-SubCell"/>
</dbReference>
<dbReference type="GO" id="GO:0005524">
    <property type="term" value="F:ATP binding"/>
    <property type="evidence" value="ECO:0007669"/>
    <property type="project" value="UniProtKB-UniRule"/>
</dbReference>
<dbReference type="GO" id="GO:0046872">
    <property type="term" value="F:metal ion binding"/>
    <property type="evidence" value="ECO:0007669"/>
    <property type="project" value="UniProtKB-KW"/>
</dbReference>
<dbReference type="GO" id="GO:0008564">
    <property type="term" value="F:protein-exporting ATPase activity"/>
    <property type="evidence" value="ECO:0007669"/>
    <property type="project" value="UniProtKB-EC"/>
</dbReference>
<dbReference type="GO" id="GO:0065002">
    <property type="term" value="P:intracellular protein transmembrane transport"/>
    <property type="evidence" value="ECO:0007669"/>
    <property type="project" value="UniProtKB-UniRule"/>
</dbReference>
<dbReference type="GO" id="GO:0017038">
    <property type="term" value="P:protein import"/>
    <property type="evidence" value="ECO:0007669"/>
    <property type="project" value="InterPro"/>
</dbReference>
<dbReference type="GO" id="GO:0006605">
    <property type="term" value="P:protein targeting"/>
    <property type="evidence" value="ECO:0007669"/>
    <property type="project" value="UniProtKB-UniRule"/>
</dbReference>
<dbReference type="GO" id="GO:0043952">
    <property type="term" value="P:protein transport by the Sec complex"/>
    <property type="evidence" value="ECO:0007669"/>
    <property type="project" value="TreeGrafter"/>
</dbReference>
<dbReference type="CDD" id="cd17928">
    <property type="entry name" value="DEXDc_SecA"/>
    <property type="match status" value="1"/>
</dbReference>
<dbReference type="CDD" id="cd18803">
    <property type="entry name" value="SF2_C_secA"/>
    <property type="match status" value="1"/>
</dbReference>
<dbReference type="FunFam" id="1.10.3060.10:FF:000001">
    <property type="entry name" value="Preprotein translocase subunit SecA"/>
    <property type="match status" value="1"/>
</dbReference>
<dbReference type="FunFam" id="3.40.50.300:FF:000081">
    <property type="entry name" value="Preprotein translocase subunit SecA"/>
    <property type="match status" value="1"/>
</dbReference>
<dbReference type="FunFam" id="3.40.50.300:FF:000113">
    <property type="entry name" value="Preprotein translocase subunit SecA"/>
    <property type="match status" value="1"/>
</dbReference>
<dbReference type="FunFam" id="3.90.1440.10:FF:000001">
    <property type="entry name" value="Preprotein translocase subunit SecA"/>
    <property type="match status" value="1"/>
</dbReference>
<dbReference type="Gene3D" id="1.10.3060.10">
    <property type="entry name" value="Helical scaffold and wing domains of SecA"/>
    <property type="match status" value="1"/>
</dbReference>
<dbReference type="Gene3D" id="3.40.50.300">
    <property type="entry name" value="P-loop containing nucleotide triphosphate hydrolases"/>
    <property type="match status" value="2"/>
</dbReference>
<dbReference type="Gene3D" id="3.90.1440.10">
    <property type="entry name" value="SecA, preprotein cross-linking domain"/>
    <property type="match status" value="1"/>
</dbReference>
<dbReference type="HAMAP" id="MF_01382">
    <property type="entry name" value="SecA"/>
    <property type="match status" value="1"/>
</dbReference>
<dbReference type="InterPro" id="IPR014001">
    <property type="entry name" value="Helicase_ATP-bd"/>
</dbReference>
<dbReference type="InterPro" id="IPR001650">
    <property type="entry name" value="Helicase_C-like"/>
</dbReference>
<dbReference type="InterPro" id="IPR027417">
    <property type="entry name" value="P-loop_NTPase"/>
</dbReference>
<dbReference type="InterPro" id="IPR004027">
    <property type="entry name" value="SEC_C_motif"/>
</dbReference>
<dbReference type="InterPro" id="IPR000185">
    <property type="entry name" value="SecA"/>
</dbReference>
<dbReference type="InterPro" id="IPR020937">
    <property type="entry name" value="SecA_CS"/>
</dbReference>
<dbReference type="InterPro" id="IPR011115">
    <property type="entry name" value="SecA_DEAD"/>
</dbReference>
<dbReference type="InterPro" id="IPR014018">
    <property type="entry name" value="SecA_motor_DEAD"/>
</dbReference>
<dbReference type="InterPro" id="IPR011130">
    <property type="entry name" value="SecA_preprotein_X-link_dom"/>
</dbReference>
<dbReference type="InterPro" id="IPR044722">
    <property type="entry name" value="SecA_SF2_C"/>
</dbReference>
<dbReference type="InterPro" id="IPR011116">
    <property type="entry name" value="SecA_Wing/Scaffold"/>
</dbReference>
<dbReference type="InterPro" id="IPR036266">
    <property type="entry name" value="SecA_Wing/Scaffold_sf"/>
</dbReference>
<dbReference type="InterPro" id="IPR036670">
    <property type="entry name" value="SecA_X-link_sf"/>
</dbReference>
<dbReference type="NCBIfam" id="NF009538">
    <property type="entry name" value="PRK12904.1"/>
    <property type="match status" value="1"/>
</dbReference>
<dbReference type="NCBIfam" id="TIGR00963">
    <property type="entry name" value="secA"/>
    <property type="match status" value="1"/>
</dbReference>
<dbReference type="PANTHER" id="PTHR30612:SF0">
    <property type="entry name" value="CHLOROPLAST PROTEIN-TRANSPORTING ATPASE"/>
    <property type="match status" value="1"/>
</dbReference>
<dbReference type="PANTHER" id="PTHR30612">
    <property type="entry name" value="SECA INNER MEMBRANE COMPONENT OF SEC PROTEIN SECRETION SYSTEM"/>
    <property type="match status" value="1"/>
</dbReference>
<dbReference type="Pfam" id="PF21090">
    <property type="entry name" value="P-loop_SecA"/>
    <property type="match status" value="1"/>
</dbReference>
<dbReference type="Pfam" id="PF02810">
    <property type="entry name" value="SEC-C"/>
    <property type="match status" value="1"/>
</dbReference>
<dbReference type="Pfam" id="PF07517">
    <property type="entry name" value="SecA_DEAD"/>
    <property type="match status" value="1"/>
</dbReference>
<dbReference type="Pfam" id="PF01043">
    <property type="entry name" value="SecA_PP_bind"/>
    <property type="match status" value="1"/>
</dbReference>
<dbReference type="Pfam" id="PF07516">
    <property type="entry name" value="SecA_SW"/>
    <property type="match status" value="1"/>
</dbReference>
<dbReference type="PRINTS" id="PR00906">
    <property type="entry name" value="SECA"/>
</dbReference>
<dbReference type="SMART" id="SM00957">
    <property type="entry name" value="SecA_DEAD"/>
    <property type="match status" value="1"/>
</dbReference>
<dbReference type="SMART" id="SM00958">
    <property type="entry name" value="SecA_PP_bind"/>
    <property type="match status" value="1"/>
</dbReference>
<dbReference type="SUPFAM" id="SSF81886">
    <property type="entry name" value="Helical scaffold and wing domains of SecA"/>
    <property type="match status" value="1"/>
</dbReference>
<dbReference type="SUPFAM" id="SSF52540">
    <property type="entry name" value="P-loop containing nucleoside triphosphate hydrolases"/>
    <property type="match status" value="2"/>
</dbReference>
<dbReference type="SUPFAM" id="SSF81767">
    <property type="entry name" value="Pre-protein crosslinking domain of SecA"/>
    <property type="match status" value="1"/>
</dbReference>
<dbReference type="PROSITE" id="PS01312">
    <property type="entry name" value="SECA"/>
    <property type="match status" value="1"/>
</dbReference>
<dbReference type="PROSITE" id="PS51196">
    <property type="entry name" value="SECA_MOTOR_DEAD"/>
    <property type="match status" value="1"/>
</dbReference>
<keyword id="KW-0067">ATP-binding</keyword>
<keyword id="KW-0997">Cell inner membrane</keyword>
<keyword id="KW-1003">Cell membrane</keyword>
<keyword id="KW-0963">Cytoplasm</keyword>
<keyword id="KW-0472">Membrane</keyword>
<keyword id="KW-0479">Metal-binding</keyword>
<keyword id="KW-0547">Nucleotide-binding</keyword>
<keyword id="KW-0653">Protein transport</keyword>
<keyword id="KW-1278">Translocase</keyword>
<keyword id="KW-0811">Translocation</keyword>
<keyword id="KW-0813">Transport</keyword>
<keyword id="KW-0862">Zinc</keyword>
<sequence length="901" mass="102023">MLIKLLTKVFGSRNDRTLRRMRKVVNIINAMEPEMEKLSDEELKGKTAEFRARLEKGEVLENLIPEAFAVVREASKRVFGMRHFDVQLLGGMVLNERCIAEMRTGEGKTLTATLPAYLNALTGKGVHVVTVNDYLAQRDAENNRPLFEFLGLTVGINLPGMPAPAKREAYAADITYGTNNEYGFDYLRDNMAFSPEERVQRKLHYALVDEVDSILIDEARTPLIISGPAEDSSEMYKRVNKIIPHLIRQEKEDSETFQGEGHFSVDEKSRQVNLTERGLVLIEELLVKEGIMDEGESLYSPANIMLMHHVTAALRAHALFTRDVDYIVKDGEVIIVDEHTGRTMQGRRWSDGLHQAVEAKEGVQIQNENQTLASITFQNYFRLYEKLAGMTGTADTEAFEFSSIYKLDTVVVPTNRPMIRKDLPDLVYMTEAEKIQAIIEDIKERTAKGQPVLVGTISIEKSELVSNELTKAGIKHNVLNAKFHANEAAIVAQAGYPAAVTIATNMAGRGTDIVLGGSWQAEVAALENPTAEQIEKIKADWQVRHDAVLEAGGLHIIGTERHESRRIDNQLRGRSGRQGDAGSSRFYLSMEDALMRIFASDRVSGMMRKLGMKPGEAIEHPWVTKAIANAQRKVESRNFDIRKQLLEYDDVANDQRRAIYSQRNELLDVSDVSETINSIREDVFKATIDAYIPPQSLEEMWDIPGLQERLKNDFDLDLPIAEWLDKEPELHEETLRERILAQSIEVYQRKEEVVGAEMMRHFEKGVMLQTLDSLWKEHLAAMDYLRQGIHLRGYAQKDPKQEYKRESFSMFAAMLESLKYEVISTLSKVQVRMPEEVEELEQQRRMEAERLAQMQQLSHQDDDSAAAAALAAQTGERKVGRNDPCPCGSGKKYKQCHGRLQ</sequence>
<reference key="1">
    <citation type="journal article" date="2009" name="J. Bacteriol.">
        <title>Genomic sequencing reveals regulatory mutations and recombinational events in the widely used MC4100 lineage of Escherichia coli K-12.</title>
        <authorList>
            <person name="Ferenci T."/>
            <person name="Zhou Z."/>
            <person name="Betteridge T."/>
            <person name="Ren Y."/>
            <person name="Liu Y."/>
            <person name="Feng L."/>
            <person name="Reeves P.R."/>
            <person name="Wang L."/>
        </authorList>
    </citation>
    <scope>NUCLEOTIDE SEQUENCE [LARGE SCALE GENOMIC DNA]</scope>
    <source>
        <strain>K12 / MC4100 / BW2952</strain>
    </source>
</reference>